<reference key="1">
    <citation type="submission" date="2008-02" db="EMBL/GenBank/DDBJ databases">
        <title>Complete sequence of Yersinia pseudotuberculosis YPIII.</title>
        <authorList>
            <consortium name="US DOE Joint Genome Institute"/>
            <person name="Copeland A."/>
            <person name="Lucas S."/>
            <person name="Lapidus A."/>
            <person name="Glavina del Rio T."/>
            <person name="Dalin E."/>
            <person name="Tice H."/>
            <person name="Bruce D."/>
            <person name="Goodwin L."/>
            <person name="Pitluck S."/>
            <person name="Munk A.C."/>
            <person name="Brettin T."/>
            <person name="Detter J.C."/>
            <person name="Han C."/>
            <person name="Tapia R."/>
            <person name="Schmutz J."/>
            <person name="Larimer F."/>
            <person name="Land M."/>
            <person name="Hauser L."/>
            <person name="Challacombe J.F."/>
            <person name="Green L."/>
            <person name="Lindler L.E."/>
            <person name="Nikolich M.P."/>
            <person name="Richardson P."/>
        </authorList>
    </citation>
    <scope>NUCLEOTIDE SEQUENCE [LARGE SCALE GENOMIC DNA]</scope>
    <source>
        <strain>YPIII</strain>
    </source>
</reference>
<comment type="function">
    <text evidence="1">Involved in mRNA degradation. Catalyzes the phosphorolysis of single-stranded polyribonucleotides processively in the 3'- to 5'-direction.</text>
</comment>
<comment type="catalytic activity">
    <reaction evidence="1">
        <text>RNA(n+1) + phosphate = RNA(n) + a ribonucleoside 5'-diphosphate</text>
        <dbReference type="Rhea" id="RHEA:22096"/>
        <dbReference type="Rhea" id="RHEA-COMP:14527"/>
        <dbReference type="Rhea" id="RHEA-COMP:17342"/>
        <dbReference type="ChEBI" id="CHEBI:43474"/>
        <dbReference type="ChEBI" id="CHEBI:57930"/>
        <dbReference type="ChEBI" id="CHEBI:140395"/>
        <dbReference type="EC" id="2.7.7.8"/>
    </reaction>
</comment>
<comment type="cofactor">
    <cofactor evidence="1">
        <name>Mg(2+)</name>
        <dbReference type="ChEBI" id="CHEBI:18420"/>
    </cofactor>
</comment>
<comment type="subunit">
    <text evidence="1">Component of the RNA degradosome, which is a multiprotein complex involved in RNA processing and mRNA degradation.</text>
</comment>
<comment type="subcellular location">
    <subcellularLocation>
        <location evidence="1">Cytoplasm</location>
    </subcellularLocation>
</comment>
<comment type="similarity">
    <text evidence="1">Belongs to the polyribonucleotide nucleotidyltransferase family.</text>
</comment>
<gene>
    <name evidence="1" type="primary">pnp</name>
    <name type="ordered locus">YPK_3726</name>
</gene>
<organism>
    <name type="scientific">Yersinia pseudotuberculosis serotype O:3 (strain YPIII)</name>
    <dbReference type="NCBI Taxonomy" id="502800"/>
    <lineage>
        <taxon>Bacteria</taxon>
        <taxon>Pseudomonadati</taxon>
        <taxon>Pseudomonadota</taxon>
        <taxon>Gammaproteobacteria</taxon>
        <taxon>Enterobacterales</taxon>
        <taxon>Yersiniaceae</taxon>
        <taxon>Yersinia</taxon>
    </lineage>
</organism>
<evidence type="ECO:0000255" key="1">
    <source>
        <dbReference type="HAMAP-Rule" id="MF_01595"/>
    </source>
</evidence>
<accession>B1JLX6</accession>
<sequence length="705" mass="76196">MLTPIIRKFQYGQHTVTIETGMMARQATAAVMVSMDDTAVFVTVVGQKKAKPGQSFFPLTVNYQERTYAAGRIPGSFFRREGRPSEGETLTSRLIDRPIRPLFPDSFLNEVQVIATVVSVNPQINPDIVALIGASAALSLSGIPFNGPIGAARVGFINDQYVLNPTTDELKESRLDLVVAGTAGAVLMVESEADILSEEQMLGAVVFGHEQQQVVIENINALVAEAGKPKWDWQAEPVNEALHARVAELAEARLGDAYRITEKQERYTQVDAIKADVTEALLAQDDTLDAAEIQDILASVEKNVVRSRVLRGEPRIDGREKDMIRGLDVRTGILPRTHGSALFTRGETQALVTATLGTARDAQNIDELMGERTDSFLLHYNFPPYCVGETGMVGSPKRREIGHGRLAKRGVLAVMPSASEFPYTIRVVSEITESNGSSSMASVCGASLALMDAGVPIKAAVAGIAMGLVKEGDNFVVLSDILGDEDHLGDMDFKVAGSRDGVTALQMDIKIEGITREIMQVALNQAKGARLHILGVMEQAISTPRGDISEFAPRIYTMKINPEKIKDVIGKGGSVIRALTDETGTTIEIEDDGTIKIAATDGDKAKHAIRRIEEITAEIEVGRIYAGKVTRIVDFGAFVAIGGGKEGLVHISQIADKRVEKVTDYLQMGQDVPVKVMEVDRQGRIRLSIKEATTPDAEAPEAAAE</sequence>
<name>PNP_YERPY</name>
<protein>
    <recommendedName>
        <fullName evidence="1">Polyribonucleotide nucleotidyltransferase</fullName>
        <ecNumber evidence="1">2.7.7.8</ecNumber>
    </recommendedName>
    <alternativeName>
        <fullName evidence="1">Polynucleotide phosphorylase</fullName>
        <shortName evidence="1">PNPase</shortName>
    </alternativeName>
</protein>
<keyword id="KW-0963">Cytoplasm</keyword>
<keyword id="KW-0460">Magnesium</keyword>
<keyword id="KW-0479">Metal-binding</keyword>
<keyword id="KW-0548">Nucleotidyltransferase</keyword>
<keyword id="KW-0694">RNA-binding</keyword>
<keyword id="KW-0808">Transferase</keyword>
<dbReference type="EC" id="2.7.7.8" evidence="1"/>
<dbReference type="EMBL" id="CP000950">
    <property type="protein sequence ID" value="ACA69993.1"/>
    <property type="molecule type" value="Genomic_DNA"/>
</dbReference>
<dbReference type="RefSeq" id="WP_002209259.1">
    <property type="nucleotide sequence ID" value="NZ_CP009792.1"/>
</dbReference>
<dbReference type="SMR" id="B1JLX6"/>
<dbReference type="GeneID" id="57975224"/>
<dbReference type="KEGG" id="ypy:YPK_3726"/>
<dbReference type="PATRIC" id="fig|502800.11.peg.74"/>
<dbReference type="GO" id="GO:0005829">
    <property type="term" value="C:cytosol"/>
    <property type="evidence" value="ECO:0007669"/>
    <property type="project" value="TreeGrafter"/>
</dbReference>
<dbReference type="GO" id="GO:0000175">
    <property type="term" value="F:3'-5'-RNA exonuclease activity"/>
    <property type="evidence" value="ECO:0007669"/>
    <property type="project" value="TreeGrafter"/>
</dbReference>
<dbReference type="GO" id="GO:0000287">
    <property type="term" value="F:magnesium ion binding"/>
    <property type="evidence" value="ECO:0007669"/>
    <property type="project" value="UniProtKB-UniRule"/>
</dbReference>
<dbReference type="GO" id="GO:0004654">
    <property type="term" value="F:polyribonucleotide nucleotidyltransferase activity"/>
    <property type="evidence" value="ECO:0007669"/>
    <property type="project" value="UniProtKB-UniRule"/>
</dbReference>
<dbReference type="GO" id="GO:0003723">
    <property type="term" value="F:RNA binding"/>
    <property type="evidence" value="ECO:0007669"/>
    <property type="project" value="UniProtKB-UniRule"/>
</dbReference>
<dbReference type="GO" id="GO:0006402">
    <property type="term" value="P:mRNA catabolic process"/>
    <property type="evidence" value="ECO:0007669"/>
    <property type="project" value="UniProtKB-UniRule"/>
</dbReference>
<dbReference type="GO" id="GO:0006396">
    <property type="term" value="P:RNA processing"/>
    <property type="evidence" value="ECO:0007669"/>
    <property type="project" value="InterPro"/>
</dbReference>
<dbReference type="CDD" id="cd02393">
    <property type="entry name" value="KH-I_PNPase"/>
    <property type="match status" value="1"/>
</dbReference>
<dbReference type="CDD" id="cd11363">
    <property type="entry name" value="RNase_PH_PNPase_1"/>
    <property type="match status" value="1"/>
</dbReference>
<dbReference type="CDD" id="cd11364">
    <property type="entry name" value="RNase_PH_PNPase_2"/>
    <property type="match status" value="1"/>
</dbReference>
<dbReference type="CDD" id="cd04472">
    <property type="entry name" value="S1_PNPase"/>
    <property type="match status" value="1"/>
</dbReference>
<dbReference type="FunFam" id="2.40.50.140:FF:000023">
    <property type="entry name" value="Polyribonucleotide nucleotidyltransferase"/>
    <property type="match status" value="1"/>
</dbReference>
<dbReference type="FunFam" id="3.30.1370.10:FF:000001">
    <property type="entry name" value="Polyribonucleotide nucleotidyltransferase"/>
    <property type="match status" value="1"/>
</dbReference>
<dbReference type="FunFam" id="3.30.230.70:FF:000001">
    <property type="entry name" value="Polyribonucleotide nucleotidyltransferase"/>
    <property type="match status" value="1"/>
</dbReference>
<dbReference type="FunFam" id="3.30.230.70:FF:000002">
    <property type="entry name" value="Polyribonucleotide nucleotidyltransferase"/>
    <property type="match status" value="1"/>
</dbReference>
<dbReference type="Gene3D" id="3.30.230.70">
    <property type="entry name" value="GHMP Kinase, N-terminal domain"/>
    <property type="match status" value="2"/>
</dbReference>
<dbReference type="Gene3D" id="3.30.1370.10">
    <property type="entry name" value="K Homology domain, type 1"/>
    <property type="match status" value="1"/>
</dbReference>
<dbReference type="Gene3D" id="2.40.50.140">
    <property type="entry name" value="Nucleic acid-binding proteins"/>
    <property type="match status" value="1"/>
</dbReference>
<dbReference type="HAMAP" id="MF_01595">
    <property type="entry name" value="PNPase"/>
    <property type="match status" value="1"/>
</dbReference>
<dbReference type="InterPro" id="IPR001247">
    <property type="entry name" value="ExoRNase_PH_dom1"/>
</dbReference>
<dbReference type="InterPro" id="IPR015847">
    <property type="entry name" value="ExoRNase_PH_dom2"/>
</dbReference>
<dbReference type="InterPro" id="IPR036345">
    <property type="entry name" value="ExoRNase_PH_dom2_sf"/>
</dbReference>
<dbReference type="InterPro" id="IPR004087">
    <property type="entry name" value="KH_dom"/>
</dbReference>
<dbReference type="InterPro" id="IPR004088">
    <property type="entry name" value="KH_dom_type_1"/>
</dbReference>
<dbReference type="InterPro" id="IPR036612">
    <property type="entry name" value="KH_dom_type_1_sf"/>
</dbReference>
<dbReference type="InterPro" id="IPR012340">
    <property type="entry name" value="NA-bd_OB-fold"/>
</dbReference>
<dbReference type="InterPro" id="IPR012162">
    <property type="entry name" value="PNPase"/>
</dbReference>
<dbReference type="InterPro" id="IPR027408">
    <property type="entry name" value="PNPase/RNase_PH_dom_sf"/>
</dbReference>
<dbReference type="InterPro" id="IPR015848">
    <property type="entry name" value="PNPase_PH_RNA-bd_bac/org-type"/>
</dbReference>
<dbReference type="InterPro" id="IPR036456">
    <property type="entry name" value="PNPase_PH_RNA-bd_sf"/>
</dbReference>
<dbReference type="InterPro" id="IPR020568">
    <property type="entry name" value="Ribosomal_Su5_D2-typ_SF"/>
</dbReference>
<dbReference type="InterPro" id="IPR003029">
    <property type="entry name" value="S1_domain"/>
</dbReference>
<dbReference type="NCBIfam" id="TIGR03591">
    <property type="entry name" value="polynuc_phos"/>
    <property type="match status" value="1"/>
</dbReference>
<dbReference type="NCBIfam" id="NF008805">
    <property type="entry name" value="PRK11824.1"/>
    <property type="match status" value="1"/>
</dbReference>
<dbReference type="PANTHER" id="PTHR11252">
    <property type="entry name" value="POLYRIBONUCLEOTIDE NUCLEOTIDYLTRANSFERASE"/>
    <property type="match status" value="1"/>
</dbReference>
<dbReference type="PANTHER" id="PTHR11252:SF0">
    <property type="entry name" value="POLYRIBONUCLEOTIDE NUCLEOTIDYLTRANSFERASE 1, MITOCHONDRIAL"/>
    <property type="match status" value="1"/>
</dbReference>
<dbReference type="Pfam" id="PF00013">
    <property type="entry name" value="KH_1"/>
    <property type="match status" value="1"/>
</dbReference>
<dbReference type="Pfam" id="PF03726">
    <property type="entry name" value="PNPase"/>
    <property type="match status" value="1"/>
</dbReference>
<dbReference type="Pfam" id="PF01138">
    <property type="entry name" value="RNase_PH"/>
    <property type="match status" value="2"/>
</dbReference>
<dbReference type="Pfam" id="PF03725">
    <property type="entry name" value="RNase_PH_C"/>
    <property type="match status" value="2"/>
</dbReference>
<dbReference type="Pfam" id="PF00575">
    <property type="entry name" value="S1"/>
    <property type="match status" value="1"/>
</dbReference>
<dbReference type="PIRSF" id="PIRSF005499">
    <property type="entry name" value="PNPase"/>
    <property type="match status" value="1"/>
</dbReference>
<dbReference type="SMART" id="SM00322">
    <property type="entry name" value="KH"/>
    <property type="match status" value="1"/>
</dbReference>
<dbReference type="SMART" id="SM00316">
    <property type="entry name" value="S1"/>
    <property type="match status" value="1"/>
</dbReference>
<dbReference type="SUPFAM" id="SSF54791">
    <property type="entry name" value="Eukaryotic type KH-domain (KH-domain type I)"/>
    <property type="match status" value="1"/>
</dbReference>
<dbReference type="SUPFAM" id="SSF50249">
    <property type="entry name" value="Nucleic acid-binding proteins"/>
    <property type="match status" value="1"/>
</dbReference>
<dbReference type="SUPFAM" id="SSF46915">
    <property type="entry name" value="Polynucleotide phosphorylase/guanosine pentaphosphate synthase (PNPase/GPSI), domain 3"/>
    <property type="match status" value="1"/>
</dbReference>
<dbReference type="SUPFAM" id="SSF55666">
    <property type="entry name" value="Ribonuclease PH domain 2-like"/>
    <property type="match status" value="2"/>
</dbReference>
<dbReference type="SUPFAM" id="SSF54211">
    <property type="entry name" value="Ribosomal protein S5 domain 2-like"/>
    <property type="match status" value="2"/>
</dbReference>
<dbReference type="PROSITE" id="PS50084">
    <property type="entry name" value="KH_TYPE_1"/>
    <property type="match status" value="1"/>
</dbReference>
<dbReference type="PROSITE" id="PS50126">
    <property type="entry name" value="S1"/>
    <property type="match status" value="1"/>
</dbReference>
<feature type="chain" id="PRO_1000192512" description="Polyribonucleotide nucleotidyltransferase">
    <location>
        <begin position="1"/>
        <end position="705"/>
    </location>
</feature>
<feature type="domain" description="KH" evidence="1">
    <location>
        <begin position="553"/>
        <end position="612"/>
    </location>
</feature>
<feature type="domain" description="S1 motif" evidence="1">
    <location>
        <begin position="622"/>
        <end position="690"/>
    </location>
</feature>
<feature type="binding site" evidence="1">
    <location>
        <position position="486"/>
    </location>
    <ligand>
        <name>Mg(2+)</name>
        <dbReference type="ChEBI" id="CHEBI:18420"/>
    </ligand>
</feature>
<feature type="binding site" evidence="1">
    <location>
        <position position="492"/>
    </location>
    <ligand>
        <name>Mg(2+)</name>
        <dbReference type="ChEBI" id="CHEBI:18420"/>
    </ligand>
</feature>
<proteinExistence type="inferred from homology"/>